<gene>
    <name type="primary">GAL10</name>
</gene>
<organism>
    <name type="scientific">Gallus gallus</name>
    <name type="common">Chicken</name>
    <dbReference type="NCBI Taxonomy" id="9031"/>
    <lineage>
        <taxon>Eukaryota</taxon>
        <taxon>Metazoa</taxon>
        <taxon>Chordata</taxon>
        <taxon>Craniata</taxon>
        <taxon>Vertebrata</taxon>
        <taxon>Euteleostomi</taxon>
        <taxon>Archelosauria</taxon>
        <taxon>Archosauria</taxon>
        <taxon>Dinosauria</taxon>
        <taxon>Saurischia</taxon>
        <taxon>Theropoda</taxon>
        <taxon>Coelurosauria</taxon>
        <taxon>Aves</taxon>
        <taxon>Neognathae</taxon>
        <taxon>Galloanserae</taxon>
        <taxon>Galliformes</taxon>
        <taxon>Phasianidae</taxon>
        <taxon>Phasianinae</taxon>
        <taxon>Gallus</taxon>
    </lineage>
</organism>
<protein>
    <recommendedName>
        <fullName>Gallinacin-10</fullName>
        <shortName>Gal-10</shortName>
    </recommendedName>
    <alternativeName>
        <fullName>Beta-defensin 10</fullName>
    </alternativeName>
    <alternativeName>
        <fullName>Gallinacin-8</fullName>
        <shortName>Gal-8</shortName>
    </alternativeName>
</protein>
<evidence type="ECO:0000250" key="1"/>
<evidence type="ECO:0000255" key="2"/>
<evidence type="ECO:0000269" key="3">
    <source>
    </source>
</evidence>
<evidence type="ECO:0000269" key="4">
    <source>
    </source>
</evidence>
<evidence type="ECO:0000269" key="5">
    <source>
    </source>
</evidence>
<evidence type="ECO:0000305" key="6"/>
<feature type="signal peptide" evidence="2">
    <location>
        <begin position="1"/>
        <end position="19"/>
    </location>
</feature>
<feature type="propeptide" id="PRO_0000288572" evidence="1">
    <location>
        <begin position="20"/>
        <end position="25"/>
    </location>
</feature>
<feature type="chain" id="PRO_0000288573" description="Gallinacin-10">
    <location>
        <begin position="26"/>
        <end position="68"/>
    </location>
</feature>
<feature type="disulfide bond" evidence="1">
    <location>
        <begin position="32"/>
        <end position="61"/>
    </location>
</feature>
<feature type="disulfide bond" evidence="1">
    <location>
        <begin position="39"/>
        <end position="54"/>
    </location>
</feature>
<feature type="disulfide bond" evidence="1">
    <location>
        <begin position="44"/>
        <end position="62"/>
    </location>
</feature>
<name>GLL10_CHICK</name>
<dbReference type="EMBL" id="AY534896">
    <property type="protein sequence ID" value="AAS99319.1"/>
    <property type="molecule type" value="mRNA"/>
</dbReference>
<dbReference type="EMBL" id="AY621312">
    <property type="protein sequence ID" value="AAT45550.1"/>
    <property type="molecule type" value="mRNA"/>
</dbReference>
<dbReference type="EMBL" id="AY621325">
    <property type="protein sequence ID" value="AAT48934.1"/>
    <property type="molecule type" value="Genomic_DNA"/>
</dbReference>
<dbReference type="EMBL" id="DQ677641">
    <property type="protein sequence ID" value="ABG73375.1"/>
    <property type="molecule type" value="mRNA"/>
</dbReference>
<dbReference type="EMBL" id="DQ858307">
    <property type="protein sequence ID" value="ABI48222.1"/>
    <property type="molecule type" value="mRNA"/>
</dbReference>
<dbReference type="EMBL" id="DQ858320">
    <property type="protein sequence ID" value="ABI48236.1"/>
    <property type="molecule type" value="mRNA"/>
</dbReference>
<dbReference type="EMBL" id="DQ858333">
    <property type="protein sequence ID" value="ABI48249.1"/>
    <property type="molecule type" value="mRNA"/>
</dbReference>
<dbReference type="EMBL" id="DQ858347">
    <property type="protein sequence ID" value="ABI48263.1"/>
    <property type="molecule type" value="mRNA"/>
</dbReference>
<dbReference type="RefSeq" id="NP_001001609.1">
    <property type="nucleotide sequence ID" value="NM_001001609.1"/>
</dbReference>
<dbReference type="SMR" id="Q6QLQ9"/>
<dbReference type="FunCoup" id="Q6QLQ9">
    <property type="interactions" value="17"/>
</dbReference>
<dbReference type="STRING" id="9031.ENSGALP00000026846"/>
<dbReference type="PaxDb" id="9031-ENSGALP00000026846"/>
<dbReference type="Ensembl" id="ENSGALT00010027395.1">
    <property type="protein sequence ID" value="ENSGALP00010015649.1"/>
    <property type="gene ID" value="ENSGALG00010011448.1"/>
</dbReference>
<dbReference type="GeneID" id="414341"/>
<dbReference type="KEGG" id="gga:414341"/>
<dbReference type="CTD" id="414341"/>
<dbReference type="VEuPathDB" id="HostDB:geneid_414341"/>
<dbReference type="eggNOG" id="ENOG502TDIN">
    <property type="taxonomic scope" value="Eukaryota"/>
</dbReference>
<dbReference type="GeneTree" id="ENSGT01030000235368"/>
<dbReference type="HOGENOM" id="CLU_189296_5_1_1"/>
<dbReference type="InParanoid" id="Q6QLQ9"/>
<dbReference type="OMA" id="QGNFCRA"/>
<dbReference type="OrthoDB" id="9378928at2759"/>
<dbReference type="PRO" id="PR:Q6QLQ9"/>
<dbReference type="Proteomes" id="UP000000539">
    <property type="component" value="Chromosome 3"/>
</dbReference>
<dbReference type="Bgee" id="ENSGALG00000016667">
    <property type="expression patterns" value="Expressed in kidney and 8 other cell types or tissues"/>
</dbReference>
<dbReference type="GO" id="GO:0005615">
    <property type="term" value="C:extracellular space"/>
    <property type="evidence" value="ECO:0000314"/>
    <property type="project" value="AgBase"/>
</dbReference>
<dbReference type="GO" id="GO:0031731">
    <property type="term" value="F:CCR6 chemokine receptor binding"/>
    <property type="evidence" value="ECO:0000318"/>
    <property type="project" value="GO_Central"/>
</dbReference>
<dbReference type="GO" id="GO:0050832">
    <property type="term" value="P:defense response to fungus"/>
    <property type="evidence" value="ECO:0000314"/>
    <property type="project" value="AgBase"/>
</dbReference>
<dbReference type="GO" id="GO:0050829">
    <property type="term" value="P:defense response to Gram-negative bacterium"/>
    <property type="evidence" value="ECO:0000314"/>
    <property type="project" value="AgBase"/>
</dbReference>
<dbReference type="GO" id="GO:0050830">
    <property type="term" value="P:defense response to Gram-positive bacterium"/>
    <property type="evidence" value="ECO:0000314"/>
    <property type="project" value="AgBase"/>
</dbReference>
<dbReference type="GO" id="GO:0002227">
    <property type="term" value="P:innate immune response in mucosa"/>
    <property type="evidence" value="ECO:0000318"/>
    <property type="project" value="GO_Central"/>
</dbReference>
<dbReference type="InterPro" id="IPR001855">
    <property type="entry name" value="Defensin_beta-like"/>
</dbReference>
<dbReference type="PANTHER" id="PTHR21388:SF9">
    <property type="entry name" value="BETA-DEFENSIN 1"/>
    <property type="match status" value="1"/>
</dbReference>
<dbReference type="PANTHER" id="PTHR21388">
    <property type="entry name" value="BETA-DEFENSIN-RELATED"/>
    <property type="match status" value="1"/>
</dbReference>
<dbReference type="Pfam" id="PF00711">
    <property type="entry name" value="Defensin_beta"/>
    <property type="match status" value="1"/>
</dbReference>
<dbReference type="SUPFAM" id="SSF57392">
    <property type="entry name" value="Defensin-like"/>
    <property type="match status" value="1"/>
</dbReference>
<proteinExistence type="evidence at transcript level"/>
<comment type="function">
    <text evidence="1">Has bactericidal activity.</text>
</comment>
<comment type="subcellular location">
    <subcellularLocation>
        <location>Secreted</location>
    </subcellularLocation>
    <subcellularLocation>
        <location evidence="1">Cytoplasmic granule</location>
    </subcellularLocation>
</comment>
<comment type="tissue specificity">
    <text evidence="3 4 5">Strong expression in the testis, liver, gall bladder and kidney. Also expressed in the ovary and male and female reproductive tracts. Expressed in the ovarian stroma and the theca and granulosa layers of the ovarian follicle.</text>
</comment>
<comment type="developmental stage">
    <text evidence="5">Detected in the theca and granulosa layers of the ovarian follicle in the white follicle (WF), F1, F3, F5, and postovulatory follicle stages.</text>
</comment>
<comment type="induction">
    <text evidence="5">Expression in the theca and granulosa layers of the F3 stage ovarian follicle is not affected by intravenous injection of LPS.</text>
</comment>
<comment type="similarity">
    <text evidence="6">Belongs to the beta-defensin family.</text>
</comment>
<reference key="1">
    <citation type="journal article" date="2004" name="Immunogenetics">
        <title>Bioinformatic discovery and initial characterisation of nine novel antimicrobial peptide genes in the chicken.</title>
        <authorList>
            <person name="Lynn D.J."/>
            <person name="Higgs R."/>
            <person name="Gaines S."/>
            <person name="Tierney J."/>
            <person name="James T."/>
            <person name="Lloyd A.T."/>
            <person name="Fares M.A."/>
            <person name="Mulcahy G."/>
            <person name="O'Farrelly C."/>
        </authorList>
    </citation>
    <scope>NUCLEOTIDE SEQUENCE [MRNA]</scope>
    <scope>TISSUE SPECIFICITY</scope>
    <source>
        <tissue>Liver</tissue>
    </source>
</reference>
<reference key="2">
    <citation type="journal article" date="2004" name="BMC Genomics">
        <title>A genome-wide screen identifies a single beta-defensin gene cluster in the chicken: implications for the origin and evolution of mammalian defensins.</title>
        <authorList>
            <person name="Xiao Y."/>
            <person name="Hughes A.L."/>
            <person name="Ando J."/>
            <person name="Matsuda Y."/>
            <person name="Cheng J.-F."/>
            <person name="Skinner-Noble D."/>
            <person name="Zhang G."/>
        </authorList>
    </citation>
    <scope>NUCLEOTIDE SEQUENCE [GENOMIC DNA / MRNA]</scope>
    <scope>TISSUE SPECIFICITY</scope>
</reference>
<reference key="3">
    <citation type="submission" date="2006-07" db="EMBL/GenBank/DDBJ databases">
        <title>Chicken beta-defensin in China chicken breeds.</title>
        <authorList>
            <person name="Chen Y."/>
            <person name="Cao Y."/>
            <person name="Xie Q."/>
            <person name="Bi Y."/>
            <person name="Chen J."/>
        </authorList>
    </citation>
    <scope>NUCLEOTIDE SEQUENCE [MRNA]</scope>
    <source>
        <strain>Guangxi Huang</strain>
        <strain>Huiyang bearded</strain>
        <strain>Qingyuan Ma</strain>
        <strain>Taihe silkies</strain>
        <strain>Xinghua</strain>
    </source>
</reference>
<reference key="4">
    <citation type="journal article" date="2007" name="Reproduction">
        <title>Changes in the expression of gallinacins, antimicrobial peptides, in ovarian follicles during follicular growth and in response to lipopolysaccharide in laying hens (Gallus domesticus).</title>
        <authorList>
            <person name="Subedi K."/>
            <person name="Isobe N."/>
            <person name="Nishibori M."/>
            <person name="Yoshimura Y."/>
        </authorList>
    </citation>
    <scope>TISSUE SPECIFICITY</scope>
    <scope>DEVELOPMENTAL STAGE</scope>
    <scope>INDUCTION</scope>
</reference>
<keyword id="KW-0044">Antibiotic</keyword>
<keyword id="KW-0929">Antimicrobial</keyword>
<keyword id="KW-0211">Defensin</keyword>
<keyword id="KW-1015">Disulfide bond</keyword>
<keyword id="KW-1185">Reference proteome</keyword>
<keyword id="KW-0964">Secreted</keyword>
<keyword id="KW-0732">Signal</keyword>
<sequence>MKILCLLFAVLLFLFQAAPGSADPLFPDTVACRTQGNFCRAGACPPTFTISGQCHGGLLNCCAKIPAQ</sequence>
<accession>Q6QLQ9</accession>